<reference key="1">
    <citation type="journal article" date="2008" name="J. Bacteriol.">
        <title>Genome sequence of Staphylococcus aureus strain Newman and comparative analysis of staphylococcal genomes: polymorphism and evolution of two major pathogenicity islands.</title>
        <authorList>
            <person name="Baba T."/>
            <person name="Bae T."/>
            <person name="Schneewind O."/>
            <person name="Takeuchi F."/>
            <person name="Hiramatsu K."/>
        </authorList>
    </citation>
    <scope>NUCLEOTIDE SEQUENCE [LARGE SCALE GENOMIC DNA]</scope>
    <source>
        <strain>Newman</strain>
    </source>
</reference>
<dbReference type="EMBL" id="AP009351">
    <property type="protein sequence ID" value="BAF66289.1"/>
    <property type="status" value="ALT_INIT"/>
    <property type="molecule type" value="Genomic_DNA"/>
</dbReference>
<dbReference type="SMR" id="A6QD57"/>
<dbReference type="KEGG" id="sae:NWMN_0017"/>
<dbReference type="HOGENOM" id="CLU_000445_30_4_9"/>
<dbReference type="Proteomes" id="UP000006386">
    <property type="component" value="Chromosome"/>
</dbReference>
<dbReference type="GO" id="GO:0005829">
    <property type="term" value="C:cytosol"/>
    <property type="evidence" value="ECO:0007669"/>
    <property type="project" value="TreeGrafter"/>
</dbReference>
<dbReference type="GO" id="GO:0032993">
    <property type="term" value="C:protein-DNA complex"/>
    <property type="evidence" value="ECO:0007669"/>
    <property type="project" value="TreeGrafter"/>
</dbReference>
<dbReference type="GO" id="GO:0000156">
    <property type="term" value="F:phosphorelay response regulator activity"/>
    <property type="evidence" value="ECO:0007669"/>
    <property type="project" value="TreeGrafter"/>
</dbReference>
<dbReference type="GO" id="GO:0000976">
    <property type="term" value="F:transcription cis-regulatory region binding"/>
    <property type="evidence" value="ECO:0007669"/>
    <property type="project" value="TreeGrafter"/>
</dbReference>
<dbReference type="GO" id="GO:0006355">
    <property type="term" value="P:regulation of DNA-templated transcription"/>
    <property type="evidence" value="ECO:0007669"/>
    <property type="project" value="InterPro"/>
</dbReference>
<dbReference type="CDD" id="cd17614">
    <property type="entry name" value="REC_OmpR_YycF-like"/>
    <property type="match status" value="1"/>
</dbReference>
<dbReference type="CDD" id="cd00383">
    <property type="entry name" value="trans_reg_C"/>
    <property type="match status" value="1"/>
</dbReference>
<dbReference type="FunFam" id="1.10.10.10:FF:000089">
    <property type="entry name" value="Alkaline phosphatase synthesis response regulator"/>
    <property type="match status" value="1"/>
</dbReference>
<dbReference type="FunFam" id="3.40.50.2300:FF:000052">
    <property type="entry name" value="DNA-binding response regulator YycF"/>
    <property type="match status" value="1"/>
</dbReference>
<dbReference type="Gene3D" id="3.40.50.2300">
    <property type="match status" value="1"/>
</dbReference>
<dbReference type="Gene3D" id="6.10.250.690">
    <property type="match status" value="1"/>
</dbReference>
<dbReference type="Gene3D" id="1.10.10.10">
    <property type="entry name" value="Winged helix-like DNA-binding domain superfamily/Winged helix DNA-binding domain"/>
    <property type="match status" value="1"/>
</dbReference>
<dbReference type="InterPro" id="IPR011006">
    <property type="entry name" value="CheY-like_superfamily"/>
</dbReference>
<dbReference type="InterPro" id="IPR001867">
    <property type="entry name" value="OmpR/PhoB-type_DNA-bd"/>
</dbReference>
<dbReference type="InterPro" id="IPR047791">
    <property type="entry name" value="Resp_reg_WalR"/>
</dbReference>
<dbReference type="InterPro" id="IPR016032">
    <property type="entry name" value="Sig_transdc_resp-reg_C-effctor"/>
</dbReference>
<dbReference type="InterPro" id="IPR001789">
    <property type="entry name" value="Sig_transdc_resp-reg_receiver"/>
</dbReference>
<dbReference type="InterPro" id="IPR039420">
    <property type="entry name" value="WalR-like"/>
</dbReference>
<dbReference type="InterPro" id="IPR036388">
    <property type="entry name" value="WH-like_DNA-bd_sf"/>
</dbReference>
<dbReference type="NCBIfam" id="NF040534">
    <property type="entry name" value="resp_reg_YycF"/>
    <property type="match status" value="1"/>
</dbReference>
<dbReference type="PANTHER" id="PTHR48111:SF40">
    <property type="entry name" value="PHOSPHATE REGULON TRANSCRIPTIONAL REGULATORY PROTEIN PHOB"/>
    <property type="match status" value="1"/>
</dbReference>
<dbReference type="PANTHER" id="PTHR48111">
    <property type="entry name" value="REGULATOR OF RPOS"/>
    <property type="match status" value="1"/>
</dbReference>
<dbReference type="Pfam" id="PF00072">
    <property type="entry name" value="Response_reg"/>
    <property type="match status" value="1"/>
</dbReference>
<dbReference type="Pfam" id="PF00486">
    <property type="entry name" value="Trans_reg_C"/>
    <property type="match status" value="1"/>
</dbReference>
<dbReference type="SMART" id="SM00448">
    <property type="entry name" value="REC"/>
    <property type="match status" value="1"/>
</dbReference>
<dbReference type="SMART" id="SM00862">
    <property type="entry name" value="Trans_reg_C"/>
    <property type="match status" value="1"/>
</dbReference>
<dbReference type="SUPFAM" id="SSF46894">
    <property type="entry name" value="C-terminal effector domain of the bipartite response regulators"/>
    <property type="match status" value="1"/>
</dbReference>
<dbReference type="SUPFAM" id="SSF52172">
    <property type="entry name" value="CheY-like"/>
    <property type="match status" value="1"/>
</dbReference>
<dbReference type="PROSITE" id="PS51755">
    <property type="entry name" value="OMPR_PHOB"/>
    <property type="match status" value="1"/>
</dbReference>
<dbReference type="PROSITE" id="PS50110">
    <property type="entry name" value="RESPONSE_REGULATORY"/>
    <property type="match status" value="1"/>
</dbReference>
<sequence>MARKVVVVDDEKPIADILEFNLKKEGYDVYCAYDGNDAVDLIYEEEPDIVLLDIMLPGRDGMEVCREVRKKYEMPIIMLTAKDSEIDKVLGLELGADDYVTKPFSTRELIARVKANLRRHYSQPAQDTGNVTNEITIKDIVIYPDAYSIKKRGEDIELTHREFELFHYLSKHMGQVMTREHLLQTVWGYDYFGDVRTVDVTIRRLREKIEDDPSHPEYIVTRRGVGYFLQQHE</sequence>
<evidence type="ECO:0000250" key="1">
    <source>
        <dbReference type="UniProtKB" id="Q2G2U6"/>
    </source>
</evidence>
<evidence type="ECO:0000250" key="2">
    <source>
        <dbReference type="UniProtKB" id="Q7A8E1"/>
    </source>
</evidence>
<evidence type="ECO:0000250" key="3">
    <source>
        <dbReference type="UniProtKB" id="Q9RDT5"/>
    </source>
</evidence>
<evidence type="ECO:0000255" key="4">
    <source>
        <dbReference type="PROSITE-ProRule" id="PRU00169"/>
    </source>
</evidence>
<evidence type="ECO:0000255" key="5">
    <source>
        <dbReference type="PROSITE-ProRule" id="PRU01091"/>
    </source>
</evidence>
<evidence type="ECO:0000305" key="6"/>
<organism>
    <name type="scientific">Staphylococcus aureus (strain Newman)</name>
    <dbReference type="NCBI Taxonomy" id="426430"/>
    <lineage>
        <taxon>Bacteria</taxon>
        <taxon>Bacillati</taxon>
        <taxon>Bacillota</taxon>
        <taxon>Bacilli</taxon>
        <taxon>Bacillales</taxon>
        <taxon>Staphylococcaceae</taxon>
        <taxon>Staphylococcus</taxon>
    </lineage>
</organism>
<accession>A6QD57</accession>
<keyword id="KW-0010">Activator</keyword>
<keyword id="KW-0963">Cytoplasm</keyword>
<keyword id="KW-0238">DNA-binding</keyword>
<keyword id="KW-0597">Phosphoprotein</keyword>
<keyword id="KW-0804">Transcription</keyword>
<keyword id="KW-0805">Transcription regulation</keyword>
<keyword id="KW-0902">Two-component regulatory system</keyword>
<proteinExistence type="inferred from homology"/>
<gene>
    <name type="primary">walR</name>
    <name type="synonym">vicR</name>
    <name type="ordered locus">NWMN_0017</name>
</gene>
<comment type="function">
    <text evidence="1 3">Member of the two-component regulatory system WalK/WalR that regulates genes involved in cell wall metabolism, virulence regulation, biofilm production, oxidative stress resistance and antibiotic resistance via direct or indirect regulation of autolysins (By similarity). Functions as a transcription regulator by direct binding to promoter regions (By similarity).</text>
</comment>
<comment type="subcellular location">
    <subcellularLocation>
        <location evidence="6">Cytoplasm</location>
    </subcellularLocation>
</comment>
<comment type="PTM">
    <text evidence="2 3">Phosphorylated by WalK on Asp-53 (By similarity). Phosphorylated by PknB on Thr-101 (By similarity).</text>
</comment>
<comment type="sequence caution" evidence="6">
    <conflict type="erroneous initiation">
        <sequence resource="EMBL-CDS" id="BAF66289"/>
    </conflict>
</comment>
<name>WALR_STAAE</name>
<feature type="chain" id="PRO_0000353043" description="Transcriptional regulatory protein WalR">
    <location>
        <begin position="1"/>
        <end position="233"/>
    </location>
</feature>
<feature type="domain" description="Response regulatory" evidence="4">
    <location>
        <begin position="4"/>
        <end position="117"/>
    </location>
</feature>
<feature type="DNA-binding region" description="OmpR/PhoB-type" evidence="5">
    <location>
        <begin position="132"/>
        <end position="231"/>
    </location>
</feature>
<feature type="modified residue" description="4-aspartylphosphate" evidence="4">
    <location>
        <position position="53"/>
    </location>
</feature>
<feature type="modified residue" description="Phosphothreonine" evidence="2">
    <location>
        <position position="101"/>
    </location>
</feature>
<protein>
    <recommendedName>
        <fullName evidence="6">Transcriptional regulatory protein WalR</fullName>
    </recommendedName>
</protein>